<accession>P32901</accession>
<accession>D6VXF3</accession>
<protein>
    <recommendedName>
        <fullName>Peptide transporter PTR2</fullName>
    </recommendedName>
    <alternativeName>
        <fullName>Peptide permease PTR2</fullName>
    </alternativeName>
</protein>
<comment type="function">
    <text>Uptake of small peptides.</text>
</comment>
<comment type="interaction">
    <interactant intactId="EBI-20799497">
        <id>P32901</id>
    </interactant>
    <interactant intactId="EBI-13072">
        <id>Q04182</id>
        <label>PDR15</label>
    </interactant>
    <organismsDiffer>false</organismsDiffer>
    <experiments>2</experiments>
</comment>
<comment type="subcellular location">
    <subcellularLocation>
        <location>Membrane</location>
        <topology>Multi-pass membrane protein</topology>
    </subcellularLocation>
</comment>
<comment type="similarity">
    <text evidence="3">Belongs to the major facilitator superfamily. Proton-dependent oligopeptide transporter (POT/PTR) (TC 2.A.17) family.</text>
</comment>
<keyword id="KW-0472">Membrane</keyword>
<keyword id="KW-0571">Peptide transport</keyword>
<keyword id="KW-0597">Phosphoprotein</keyword>
<keyword id="KW-0653">Protein transport</keyword>
<keyword id="KW-1185">Reference proteome</keyword>
<keyword id="KW-0812">Transmembrane</keyword>
<keyword id="KW-1133">Transmembrane helix</keyword>
<keyword id="KW-0813">Transport</keyword>
<sequence>MLNHPSQGSDDAQDEKQGDFPVIEEEKTQAVTLKDSYVSDDVANSTERYNLSPSPEDEDFEGPTEEEMQTLRHVGGKIPMRCWLIAIVELSERFSYYGLSAPFQNYMEYGPNDSPKGVLSLNSQGATGLSYFFQFWCYVTPVFGGYVADTFWGKYNTICCGTAIYIAGIFILFITSIPSVGNRDSAIGGFIAAIILIGIATGMIKANLSVLIADQLPKRKPSIKVLKSGERVIVDSNITLQNVFMFFYFMINVGSLSLMATTELEYHKGFWAAYLLPFCFFWIAVVTLIFGKKQYIQRPIGDKVIAKSFKVCWILTKNKFDFNAAKPSVHPEKNYPWNDKFVDEIKRALAACKVFIFYPIYWTQYGTMISSFITQASMMELHGIPNDFLQAFDSIALIIFIPIFEKFVYPFIRRYTPLKPITKIFFGFMFGSFAMTWAAVLQSFVYKAGPWYNEPLGHNTPNHVHVCWQIPAYVLISFSEIFASITGLEYAYSKAPASMKSFIMSIFLLTNAFGSAIGCALSPVTVDPKFTWLFTGLAVACFISGCLFWLCFRKYNDTEEEMNAMDYEEEDEFDLNPISAPKANDIEILEPMESLRSTTKY</sequence>
<dbReference type="EMBL" id="L11994">
    <property type="protein sequence ID" value="AAC37368.1"/>
    <property type="molecule type" value="Unassigned_DNA"/>
</dbReference>
<dbReference type="EMBL" id="X73541">
    <property type="protein sequence ID" value="CAA51947.1"/>
    <property type="molecule type" value="Genomic_DNA"/>
</dbReference>
<dbReference type="EMBL" id="Z28318">
    <property type="protein sequence ID" value="CAA82172.1"/>
    <property type="molecule type" value="Genomic_DNA"/>
</dbReference>
<dbReference type="EMBL" id="BK006944">
    <property type="protein sequence ID" value="DAA09243.1"/>
    <property type="molecule type" value="Genomic_DNA"/>
</dbReference>
<dbReference type="PIR" id="S38171">
    <property type="entry name" value="S38171"/>
</dbReference>
<dbReference type="RefSeq" id="NP_013019.1">
    <property type="nucleotide sequence ID" value="NM_001179883.1"/>
</dbReference>
<dbReference type="SMR" id="P32901"/>
<dbReference type="BioGRID" id="34224">
    <property type="interactions" value="133"/>
</dbReference>
<dbReference type="DIP" id="DIP-5311N"/>
<dbReference type="FunCoup" id="P32901">
    <property type="interactions" value="1382"/>
</dbReference>
<dbReference type="IntAct" id="P32901">
    <property type="interactions" value="8"/>
</dbReference>
<dbReference type="MINT" id="P32901"/>
<dbReference type="STRING" id="4932.YKR093W"/>
<dbReference type="TCDB" id="2.A.17.2.2">
    <property type="family name" value="the proton-dependent oligopeptide transporter (pot/ptr) family"/>
</dbReference>
<dbReference type="CarbonylDB" id="P32901"/>
<dbReference type="GlyGen" id="P32901">
    <property type="glycosylation" value="1 site"/>
</dbReference>
<dbReference type="iPTMnet" id="P32901"/>
<dbReference type="PaxDb" id="4932-YKR093W"/>
<dbReference type="PeptideAtlas" id="P32901"/>
<dbReference type="DNASU" id="853968"/>
<dbReference type="EnsemblFungi" id="YKR093W_mRNA">
    <property type="protein sequence ID" value="YKR093W"/>
    <property type="gene ID" value="YKR093W"/>
</dbReference>
<dbReference type="GeneID" id="853968"/>
<dbReference type="KEGG" id="sce:YKR093W"/>
<dbReference type="AGR" id="SGD:S000001801"/>
<dbReference type="SGD" id="S000001801">
    <property type="gene designation" value="PTR2"/>
</dbReference>
<dbReference type="VEuPathDB" id="FungiDB:YKR093W"/>
<dbReference type="eggNOG" id="KOG1237">
    <property type="taxonomic scope" value="Eukaryota"/>
</dbReference>
<dbReference type="HOGENOM" id="CLU_004790_4_2_1"/>
<dbReference type="InParanoid" id="P32901"/>
<dbReference type="OMA" id="QMMGVWF"/>
<dbReference type="OrthoDB" id="8904098at2759"/>
<dbReference type="BioCyc" id="YEAST:G3O-32056-MONOMER"/>
<dbReference type="Reactome" id="R-SCE-427975">
    <property type="pathway name" value="Proton/oligopeptide cotransporters"/>
</dbReference>
<dbReference type="Reactome" id="R-SCE-6798695">
    <property type="pathway name" value="Neutrophil degranulation"/>
</dbReference>
<dbReference type="BioGRID-ORCS" id="853968">
    <property type="hits" value="4 hits in 10 CRISPR screens"/>
</dbReference>
<dbReference type="PRO" id="PR:P32901"/>
<dbReference type="Proteomes" id="UP000002311">
    <property type="component" value="Chromosome XI"/>
</dbReference>
<dbReference type="RNAct" id="P32901">
    <property type="molecule type" value="protein"/>
</dbReference>
<dbReference type="GO" id="GO:0071944">
    <property type="term" value="C:cell periphery"/>
    <property type="evidence" value="ECO:0007005"/>
    <property type="project" value="SGD"/>
</dbReference>
<dbReference type="GO" id="GO:0000324">
    <property type="term" value="C:fungal-type vacuole"/>
    <property type="evidence" value="ECO:0007005"/>
    <property type="project" value="SGD"/>
</dbReference>
<dbReference type="GO" id="GO:0005886">
    <property type="term" value="C:plasma membrane"/>
    <property type="evidence" value="ECO:0000314"/>
    <property type="project" value="SGD"/>
</dbReference>
<dbReference type="GO" id="GO:0071916">
    <property type="term" value="F:dipeptide transmembrane transporter activity"/>
    <property type="evidence" value="ECO:0000314"/>
    <property type="project" value="SGD"/>
</dbReference>
<dbReference type="GO" id="GO:1904680">
    <property type="term" value="F:peptide transmembrane transporter activity"/>
    <property type="evidence" value="ECO:0000315"/>
    <property type="project" value="SGD"/>
</dbReference>
<dbReference type="GO" id="GO:0042937">
    <property type="term" value="F:tripeptide transmembrane transporter activity"/>
    <property type="evidence" value="ECO:0000314"/>
    <property type="project" value="SGD"/>
</dbReference>
<dbReference type="GO" id="GO:0140206">
    <property type="term" value="P:dipeptide import across plasma membrane"/>
    <property type="evidence" value="ECO:0000318"/>
    <property type="project" value="GO_Central"/>
</dbReference>
<dbReference type="GO" id="GO:0042938">
    <property type="term" value="P:dipeptide transport"/>
    <property type="evidence" value="ECO:0000314"/>
    <property type="project" value="SGD"/>
</dbReference>
<dbReference type="GO" id="GO:0015833">
    <property type="term" value="P:peptide transport"/>
    <property type="evidence" value="ECO:0000315"/>
    <property type="project" value="SGD"/>
</dbReference>
<dbReference type="GO" id="GO:0015031">
    <property type="term" value="P:protein transport"/>
    <property type="evidence" value="ECO:0007669"/>
    <property type="project" value="UniProtKB-KW"/>
</dbReference>
<dbReference type="GO" id="GO:0042939">
    <property type="term" value="P:tripeptide transport"/>
    <property type="evidence" value="ECO:0000314"/>
    <property type="project" value="SGD"/>
</dbReference>
<dbReference type="CDD" id="cd17350">
    <property type="entry name" value="MFS_PTR2"/>
    <property type="match status" value="1"/>
</dbReference>
<dbReference type="FunFam" id="1.20.1250.20:FF:000085">
    <property type="entry name" value="MFS peptide transporter Ptr2"/>
    <property type="match status" value="1"/>
</dbReference>
<dbReference type="Gene3D" id="1.20.1250.20">
    <property type="entry name" value="MFS general substrate transporter like domains"/>
    <property type="match status" value="1"/>
</dbReference>
<dbReference type="InterPro" id="IPR036259">
    <property type="entry name" value="MFS_trans_sf"/>
</dbReference>
<dbReference type="InterPro" id="IPR000109">
    <property type="entry name" value="POT_fam"/>
</dbReference>
<dbReference type="InterPro" id="IPR018456">
    <property type="entry name" value="PTR2_symporter_CS"/>
</dbReference>
<dbReference type="PANTHER" id="PTHR11654">
    <property type="entry name" value="OLIGOPEPTIDE TRANSPORTER-RELATED"/>
    <property type="match status" value="1"/>
</dbReference>
<dbReference type="Pfam" id="PF00854">
    <property type="entry name" value="PTR2"/>
    <property type="match status" value="1"/>
</dbReference>
<dbReference type="SUPFAM" id="SSF103473">
    <property type="entry name" value="MFS general substrate transporter"/>
    <property type="match status" value="1"/>
</dbReference>
<dbReference type="PROSITE" id="PS01022">
    <property type="entry name" value="PTR2_1"/>
    <property type="match status" value="1"/>
</dbReference>
<dbReference type="PROSITE" id="PS01023">
    <property type="entry name" value="PTR2_2"/>
    <property type="match status" value="1"/>
</dbReference>
<gene>
    <name type="primary">PTR2</name>
    <name type="ordered locus">YKR093W</name>
    <name type="ORF">YKR413</name>
</gene>
<organism>
    <name type="scientific">Saccharomyces cerevisiae (strain ATCC 204508 / S288c)</name>
    <name type="common">Baker's yeast</name>
    <dbReference type="NCBI Taxonomy" id="559292"/>
    <lineage>
        <taxon>Eukaryota</taxon>
        <taxon>Fungi</taxon>
        <taxon>Dikarya</taxon>
        <taxon>Ascomycota</taxon>
        <taxon>Saccharomycotina</taxon>
        <taxon>Saccharomycetes</taxon>
        <taxon>Saccharomycetales</taxon>
        <taxon>Saccharomycetaceae</taxon>
        <taxon>Saccharomyces</taxon>
    </lineage>
</organism>
<proteinExistence type="evidence at protein level"/>
<reference key="1">
    <citation type="journal article" date="1994" name="Mol. Cell. Biol.">
        <title>Isolation and characterization of a Saccharomyces cerevisiae peptide transport gene.</title>
        <authorList>
            <person name="Perry J.R."/>
            <person name="Basrai M.A."/>
            <person name="Steiner H.-Y."/>
            <person name="Naider F."/>
            <person name="Becker J.M."/>
        </authorList>
    </citation>
    <scope>NUCLEOTIDE SEQUENCE [GENOMIC DNA]</scope>
</reference>
<reference key="2">
    <citation type="journal article" date="1993" name="Yeast">
        <title>The complete sequence of a 15,820 bp segment of Saccharomyces cerevisiae chromosome XI contains the UBI2 and MPL1 genes and three new open reading frames.</title>
        <authorList>
            <person name="Bou G."/>
            <person name="Esteban P.F."/>
            <person name="Baladron V."/>
            <person name="Gonzalez G.A."/>
            <person name="Cantalejo J.G."/>
            <person name="Remacha M.A."/>
            <person name="Jimenez A."/>
            <person name="del Rey F."/>
            <person name="Ballesta J.P.G."/>
            <person name="Revuelta J.L."/>
        </authorList>
    </citation>
    <scope>NUCLEOTIDE SEQUENCE [GENOMIC DNA]</scope>
</reference>
<reference key="3">
    <citation type="journal article" date="1994" name="Nature">
        <title>Complete DNA sequence of yeast chromosome XI.</title>
        <authorList>
            <person name="Dujon B."/>
            <person name="Alexandraki D."/>
            <person name="Andre B."/>
            <person name="Ansorge W."/>
            <person name="Baladron V."/>
            <person name="Ballesta J.P.G."/>
            <person name="Banrevi A."/>
            <person name="Bolle P.-A."/>
            <person name="Bolotin-Fukuhara M."/>
            <person name="Bossier P."/>
            <person name="Bou G."/>
            <person name="Boyer J."/>
            <person name="Buitrago M.J."/>
            <person name="Cheret G."/>
            <person name="Colleaux L."/>
            <person name="Daignan-Fornier B."/>
            <person name="del Rey F."/>
            <person name="Dion C."/>
            <person name="Domdey H."/>
            <person name="Duesterhoeft A."/>
            <person name="Duesterhus S."/>
            <person name="Entian K.-D."/>
            <person name="Erfle H."/>
            <person name="Esteban P.F."/>
            <person name="Feldmann H."/>
            <person name="Fernandes L."/>
            <person name="Fobo G.M."/>
            <person name="Fritz C."/>
            <person name="Fukuhara H."/>
            <person name="Gabel C."/>
            <person name="Gaillon L."/>
            <person name="Garcia-Cantalejo J.M."/>
            <person name="Garcia-Ramirez J.J."/>
            <person name="Gent M.E."/>
            <person name="Ghazvini M."/>
            <person name="Goffeau A."/>
            <person name="Gonzalez A."/>
            <person name="Grothues D."/>
            <person name="Guerreiro P."/>
            <person name="Hegemann J.H."/>
            <person name="Hewitt N."/>
            <person name="Hilger F."/>
            <person name="Hollenberg C.P."/>
            <person name="Horaitis O."/>
            <person name="Indge K.J."/>
            <person name="Jacquier A."/>
            <person name="James C.M."/>
            <person name="Jauniaux J.-C."/>
            <person name="Jimenez A."/>
            <person name="Keuchel H."/>
            <person name="Kirchrath L."/>
            <person name="Kleine K."/>
            <person name="Koetter P."/>
            <person name="Legrain P."/>
            <person name="Liebl S."/>
            <person name="Louis E.J."/>
            <person name="Maia e Silva A."/>
            <person name="Marck C."/>
            <person name="Monnier A.-L."/>
            <person name="Moestl D."/>
            <person name="Mueller S."/>
            <person name="Obermaier B."/>
            <person name="Oliver S.G."/>
            <person name="Pallier C."/>
            <person name="Pascolo S."/>
            <person name="Pfeiffer F."/>
            <person name="Philippsen P."/>
            <person name="Planta R.J."/>
            <person name="Pohl F.M."/>
            <person name="Pohl T.M."/>
            <person name="Poehlmann R."/>
            <person name="Portetelle D."/>
            <person name="Purnelle B."/>
            <person name="Puzos V."/>
            <person name="Ramezani Rad M."/>
            <person name="Rasmussen S.W."/>
            <person name="Remacha M.A."/>
            <person name="Revuelta J.L."/>
            <person name="Richard G.-F."/>
            <person name="Rieger M."/>
            <person name="Rodrigues-Pousada C."/>
            <person name="Rose M."/>
            <person name="Rupp T."/>
            <person name="Santos M.A."/>
            <person name="Schwager C."/>
            <person name="Sensen C."/>
            <person name="Skala J."/>
            <person name="Soares H."/>
            <person name="Sor F."/>
            <person name="Stegemann J."/>
            <person name="Tettelin H."/>
            <person name="Thierry A."/>
            <person name="Tzermia M."/>
            <person name="Urrestarazu L.A."/>
            <person name="van Dyck L."/>
            <person name="van Vliet-Reedijk J.C."/>
            <person name="Valens M."/>
            <person name="Vandenbol M."/>
            <person name="Vilela C."/>
            <person name="Vissers S."/>
            <person name="von Wettstein D."/>
            <person name="Voss H."/>
            <person name="Wiemann S."/>
            <person name="Xu G."/>
            <person name="Zimmermann J."/>
            <person name="Haasemann M."/>
            <person name="Becker I."/>
            <person name="Mewes H.-W."/>
        </authorList>
    </citation>
    <scope>NUCLEOTIDE SEQUENCE [LARGE SCALE GENOMIC DNA]</scope>
    <source>
        <strain>ATCC 204508 / S288c</strain>
    </source>
</reference>
<reference key="4">
    <citation type="journal article" date="2014" name="G3 (Bethesda)">
        <title>The reference genome sequence of Saccharomyces cerevisiae: Then and now.</title>
        <authorList>
            <person name="Engel S.R."/>
            <person name="Dietrich F.S."/>
            <person name="Fisk D.G."/>
            <person name="Binkley G."/>
            <person name="Balakrishnan R."/>
            <person name="Costanzo M.C."/>
            <person name="Dwight S.S."/>
            <person name="Hitz B.C."/>
            <person name="Karra K."/>
            <person name="Nash R.S."/>
            <person name="Weng S."/>
            <person name="Wong E.D."/>
            <person name="Lloyd P."/>
            <person name="Skrzypek M.S."/>
            <person name="Miyasato S.R."/>
            <person name="Simison M."/>
            <person name="Cherry J.M."/>
        </authorList>
    </citation>
    <scope>GENOME REANNOTATION</scope>
    <source>
        <strain>ATCC 204508 / S288c</strain>
    </source>
</reference>
<reference key="5">
    <citation type="journal article" date="2006" name="Proc. Natl. Acad. Sci. U.S.A.">
        <title>A global topology map of the Saccharomyces cerevisiae membrane proteome.</title>
        <authorList>
            <person name="Kim H."/>
            <person name="Melen K."/>
            <person name="Oesterberg M."/>
            <person name="von Heijne G."/>
        </authorList>
    </citation>
    <scope>TOPOLOGY [LARGE SCALE ANALYSIS]</scope>
    <source>
        <strain>ATCC 208353 / W303-1A</strain>
    </source>
</reference>
<reference key="6">
    <citation type="journal article" date="2007" name="J. Proteome Res.">
        <title>Large-scale phosphorylation analysis of alpha-factor-arrested Saccharomyces cerevisiae.</title>
        <authorList>
            <person name="Li X."/>
            <person name="Gerber S.A."/>
            <person name="Rudner A.D."/>
            <person name="Beausoleil S.A."/>
            <person name="Haas W."/>
            <person name="Villen J."/>
            <person name="Elias J.E."/>
            <person name="Gygi S.P."/>
        </authorList>
    </citation>
    <scope>PHOSPHORYLATION [LARGE SCALE ANALYSIS] AT TYR-37; SER-39; SER-45 AND SER-594</scope>
    <scope>IDENTIFICATION BY MASS SPECTROMETRY [LARGE SCALE ANALYSIS]</scope>
    <source>
        <strain>ADR376</strain>
    </source>
</reference>
<reference key="7">
    <citation type="journal article" date="2008" name="Mol. Cell. Proteomics">
        <title>A multidimensional chromatography technology for in-depth phosphoproteome analysis.</title>
        <authorList>
            <person name="Albuquerque C.P."/>
            <person name="Smolka M.B."/>
            <person name="Payne S.H."/>
            <person name="Bafna V."/>
            <person name="Eng J."/>
            <person name="Zhou H."/>
        </authorList>
    </citation>
    <scope>IDENTIFICATION BY MASS SPECTROMETRY [LARGE SCALE ANALYSIS]</scope>
</reference>
<reference key="8">
    <citation type="journal article" date="2009" name="Science">
        <title>Global analysis of Cdk1 substrate phosphorylation sites provides insights into evolution.</title>
        <authorList>
            <person name="Holt L.J."/>
            <person name="Tuch B.B."/>
            <person name="Villen J."/>
            <person name="Johnson A.D."/>
            <person name="Gygi S.P."/>
            <person name="Morgan D.O."/>
        </authorList>
    </citation>
    <scope>PHOSPHORYLATION [LARGE SCALE ANALYSIS] AT SER-39 AND SER-594</scope>
    <scope>IDENTIFICATION BY MASS SPECTROMETRY [LARGE SCALE ANALYSIS]</scope>
</reference>
<evidence type="ECO:0000255" key="1"/>
<evidence type="ECO:0000256" key="2">
    <source>
        <dbReference type="SAM" id="MobiDB-lite"/>
    </source>
</evidence>
<evidence type="ECO:0000305" key="3"/>
<evidence type="ECO:0007744" key="4">
    <source>
    </source>
</evidence>
<evidence type="ECO:0007744" key="5">
    <source>
    </source>
</evidence>
<name>PTR2_YEAST</name>
<feature type="chain" id="PRO_0000064317" description="Peptide transporter PTR2">
    <location>
        <begin position="1"/>
        <end position="601"/>
    </location>
</feature>
<feature type="topological domain" description="Extracellular" evidence="1">
    <location>
        <begin position="1"/>
        <end position="150"/>
    </location>
</feature>
<feature type="transmembrane region" description="Helical" evidence="1">
    <location>
        <begin position="151"/>
        <end position="172"/>
    </location>
</feature>
<feature type="topological domain" description="Cytoplasmic" evidence="1">
    <location>
        <begin position="173"/>
        <end position="182"/>
    </location>
</feature>
<feature type="transmembrane region" description="Helical" evidence="1">
    <location>
        <begin position="183"/>
        <end position="202"/>
    </location>
</feature>
<feature type="topological domain" description="Extracellular" evidence="1">
    <location>
        <begin position="203"/>
        <end position="210"/>
    </location>
</feature>
<feature type="transmembrane region" description="Helical" evidence="1">
    <location>
        <begin position="211"/>
        <end position="229"/>
    </location>
</feature>
<feature type="topological domain" description="Cytoplasmic" evidence="1">
    <location>
        <begin position="230"/>
        <end position="267"/>
    </location>
</feature>
<feature type="transmembrane region" description="Helical" evidence="1">
    <location>
        <begin position="268"/>
        <end position="287"/>
    </location>
</feature>
<feature type="topological domain" description="Extracellular" evidence="1">
    <location>
        <begin position="288"/>
        <end position="294"/>
    </location>
</feature>
<feature type="transmembrane region" description="Helical" evidence="1">
    <location>
        <begin position="295"/>
        <end position="316"/>
    </location>
</feature>
<feature type="topological domain" description="Cytoplasmic" evidence="1">
    <location>
        <begin position="317"/>
        <end position="378"/>
    </location>
</feature>
<feature type="transmembrane region" description="Helical" evidence="1">
    <location>
        <begin position="379"/>
        <end position="399"/>
    </location>
</feature>
<feature type="topological domain" description="Extracellular" evidence="1">
    <location>
        <begin position="400"/>
        <end position="412"/>
    </location>
</feature>
<feature type="transmembrane region" description="Helical" evidence="1">
    <location>
        <begin position="413"/>
        <end position="429"/>
    </location>
</feature>
<feature type="topological domain" description="Cytoplasmic" evidence="1">
    <location>
        <begin position="430"/>
        <end position="448"/>
    </location>
</feature>
<feature type="transmembrane region" description="Helical" evidence="1">
    <location>
        <begin position="449"/>
        <end position="466"/>
    </location>
</feature>
<feature type="topological domain" description="Extracellular" evidence="1">
    <location>
        <begin position="467"/>
        <end position="494"/>
    </location>
</feature>
<feature type="transmembrane region" description="Helical" evidence="1">
    <location>
        <begin position="495"/>
        <end position="513"/>
    </location>
</feature>
<feature type="topological domain" description="Cytoplasmic" evidence="1">
    <location>
        <begin position="514"/>
        <end position="526"/>
    </location>
</feature>
<feature type="transmembrane region" description="Helical" evidence="1">
    <location>
        <begin position="527"/>
        <end position="547"/>
    </location>
</feature>
<feature type="topological domain" description="Extracellular" evidence="1">
    <location>
        <begin position="548"/>
        <end position="554"/>
    </location>
</feature>
<feature type="transmembrane region" description="Helical" evidence="1">
    <location>
        <begin position="555"/>
        <end position="577"/>
    </location>
</feature>
<feature type="topological domain" description="Cytoplasmic" evidence="1">
    <location>
        <begin position="578"/>
        <end position="601"/>
    </location>
</feature>
<feature type="region of interest" description="Disordered" evidence="2">
    <location>
        <begin position="1"/>
        <end position="66"/>
    </location>
</feature>
<feature type="compositionally biased region" description="Polar residues" evidence="2">
    <location>
        <begin position="1"/>
        <end position="10"/>
    </location>
</feature>
<feature type="compositionally biased region" description="Basic and acidic residues" evidence="2">
    <location>
        <begin position="14"/>
        <end position="28"/>
    </location>
</feature>
<feature type="compositionally biased region" description="Polar residues" evidence="2">
    <location>
        <begin position="42"/>
        <end position="53"/>
    </location>
</feature>
<feature type="compositionally biased region" description="Acidic residues" evidence="2">
    <location>
        <begin position="55"/>
        <end position="66"/>
    </location>
</feature>
<feature type="modified residue" description="Phosphotyrosine" evidence="4">
    <location>
        <position position="37"/>
    </location>
</feature>
<feature type="modified residue" description="Phosphoserine" evidence="4 5">
    <location>
        <position position="39"/>
    </location>
</feature>
<feature type="modified residue" description="Phosphoserine" evidence="4">
    <location>
        <position position="45"/>
    </location>
</feature>
<feature type="modified residue" description="Phosphoserine" evidence="4 5">
    <location>
        <position position="594"/>
    </location>
</feature>
<feature type="sequence conflict" description="In Ref. 1; AAC37368." evidence="3" ref="1">
    <original>S</original>
    <variation>T</variation>
    <location>
        <position position="39"/>
    </location>
</feature>